<keyword id="KW-0238">DNA-binding</keyword>
<keyword id="KW-0371">Homeobox</keyword>
<keyword id="KW-0539">Nucleus</keyword>
<keyword id="KW-1185">Reference proteome</keyword>
<accession>Q15270</accession>
<sequence length="448" mass="44012">MSASGPEAPGDIPALPPPPQPGSGPAPPAPAAAAQEAMDGRAELPAFPRAGAPPLAASDTVPAAPEGAGAARPAAPLRPTSFSVLDILDPNKFNSRRRRCVLLGPVAPAACAPCASAPCAPAPAASGRPPRAEELERRALAGAGGVGAAGAEPPNAGDPFKAGEAETNDTNGYSSGGGGHSPSADSGDEVPDDEDDDEDEAPETEAARGAEEARGGGGGLGARGSGCQGAAETDASPGATVDEAAAPGPRENSPVAQGPPGGAAAPGGAGTTPQGTATAAKPKRKRTGSDSKSGKPRRARTAFTYEQLVALENKFKATRYLSVCERLNLALSLSLTETQVKIWFQNRRTKWKKQNPGADTSAPTGGGGGPGPGAGPGTGLPGGLSPLSPSPPMGAPLGMHGPAGYPAHGPGGLVCAAQLPFLSSPAVLSPFVLGSQTYGAPAFYAPHL</sequence>
<gene>
    <name evidence="7" type="primary">NKX1-1</name>
    <name evidence="5" type="synonym">HPX153</name>
    <name type="synonym">SAX2</name>
</gene>
<name>NKX11_HUMAN</name>
<protein>
    <recommendedName>
        <fullName evidence="6">NK1 transcription factor-related protein 1</fullName>
    </recommendedName>
    <alternativeName>
        <fullName>Homeobox protein 153</fullName>
        <shortName evidence="5">HPX-153</shortName>
    </alternativeName>
    <alternativeName>
        <fullName>Homeobox protein SAX-2</fullName>
    </alternativeName>
    <alternativeName>
        <fullName>NKX-1.1</fullName>
    </alternativeName>
</protein>
<feature type="chain" id="PRO_0000333009" description="NK1 transcription factor-related protein 1">
    <location>
        <begin position="1"/>
        <end position="448"/>
    </location>
</feature>
<feature type="DNA-binding region" description="Homeobox" evidence="2">
    <location>
        <begin position="296"/>
        <end position="355"/>
    </location>
</feature>
<feature type="region of interest" description="Disordered" evidence="3">
    <location>
        <begin position="1"/>
        <end position="80"/>
    </location>
</feature>
<feature type="region of interest" description="Disordered" evidence="3">
    <location>
        <begin position="115"/>
        <end position="299"/>
    </location>
</feature>
<feature type="region of interest" description="Disordered" evidence="3">
    <location>
        <begin position="350"/>
        <end position="397"/>
    </location>
</feature>
<feature type="compositionally biased region" description="Low complexity" evidence="3">
    <location>
        <begin position="1"/>
        <end position="13"/>
    </location>
</feature>
<feature type="compositionally biased region" description="Pro residues" evidence="3">
    <location>
        <begin position="14"/>
        <end position="30"/>
    </location>
</feature>
<feature type="compositionally biased region" description="Low complexity" evidence="3">
    <location>
        <begin position="62"/>
        <end position="79"/>
    </location>
</feature>
<feature type="compositionally biased region" description="Low complexity" evidence="3">
    <location>
        <begin position="115"/>
        <end position="129"/>
    </location>
</feature>
<feature type="compositionally biased region" description="Basic and acidic residues" evidence="3">
    <location>
        <begin position="130"/>
        <end position="139"/>
    </location>
</feature>
<feature type="compositionally biased region" description="Acidic residues" evidence="3">
    <location>
        <begin position="186"/>
        <end position="203"/>
    </location>
</feature>
<feature type="compositionally biased region" description="Basic and acidic residues" evidence="3">
    <location>
        <begin position="205"/>
        <end position="214"/>
    </location>
</feature>
<feature type="compositionally biased region" description="Gly residues" evidence="3">
    <location>
        <begin position="215"/>
        <end position="227"/>
    </location>
</feature>
<feature type="compositionally biased region" description="Gly residues" evidence="3">
    <location>
        <begin position="259"/>
        <end position="270"/>
    </location>
</feature>
<feature type="compositionally biased region" description="Low complexity" evidence="3">
    <location>
        <begin position="271"/>
        <end position="280"/>
    </location>
</feature>
<feature type="compositionally biased region" description="Gly residues" evidence="3">
    <location>
        <begin position="364"/>
        <end position="382"/>
    </location>
</feature>
<feature type="sequence conflict" description="In Ref. 2; CAA54282." evidence="6" ref="2">
    <original>L</original>
    <variation>V</variation>
    <location>
        <position position="331"/>
    </location>
</feature>
<comment type="function">
    <text evidence="1">May be required for the coordinated crosstalk of factors involved in the maintenance of energy homeostasis, possibly by regulating the transcription of specific factors involved in energy balance.</text>
</comment>
<comment type="subcellular location">
    <subcellularLocation>
        <location evidence="2">Nucleus</location>
    </subcellularLocation>
</comment>
<comment type="tissue specificity">
    <text evidence="4">Expressed in hemopoietic progenitor cells.</text>
</comment>
<comment type="similarity">
    <text evidence="6">Belongs to the NK-1 homeobox family.</text>
</comment>
<reference key="1">
    <citation type="journal article" date="2005" name="Nature">
        <title>Generation and annotation of the DNA sequences of human chromosomes 2 and 4.</title>
        <authorList>
            <person name="Hillier L.W."/>
            <person name="Graves T.A."/>
            <person name="Fulton R.S."/>
            <person name="Fulton L.A."/>
            <person name="Pepin K.H."/>
            <person name="Minx P."/>
            <person name="Wagner-McPherson C."/>
            <person name="Layman D."/>
            <person name="Wylie K."/>
            <person name="Sekhon M."/>
            <person name="Becker M.C."/>
            <person name="Fewell G.A."/>
            <person name="Delehaunty K.D."/>
            <person name="Miner T.L."/>
            <person name="Nash W.E."/>
            <person name="Kremitzki C."/>
            <person name="Oddy L."/>
            <person name="Du H."/>
            <person name="Sun H."/>
            <person name="Bradshaw-Cordum H."/>
            <person name="Ali J."/>
            <person name="Carter J."/>
            <person name="Cordes M."/>
            <person name="Harris A."/>
            <person name="Isak A."/>
            <person name="van Brunt A."/>
            <person name="Nguyen C."/>
            <person name="Du F."/>
            <person name="Courtney L."/>
            <person name="Kalicki J."/>
            <person name="Ozersky P."/>
            <person name="Abbott S."/>
            <person name="Armstrong J."/>
            <person name="Belter E.A."/>
            <person name="Caruso L."/>
            <person name="Cedroni M."/>
            <person name="Cotton M."/>
            <person name="Davidson T."/>
            <person name="Desai A."/>
            <person name="Elliott G."/>
            <person name="Erb T."/>
            <person name="Fronick C."/>
            <person name="Gaige T."/>
            <person name="Haakenson W."/>
            <person name="Haglund K."/>
            <person name="Holmes A."/>
            <person name="Harkins R."/>
            <person name="Kim K."/>
            <person name="Kruchowski S.S."/>
            <person name="Strong C.M."/>
            <person name="Grewal N."/>
            <person name="Goyea E."/>
            <person name="Hou S."/>
            <person name="Levy A."/>
            <person name="Martinka S."/>
            <person name="Mead K."/>
            <person name="McLellan M.D."/>
            <person name="Meyer R."/>
            <person name="Randall-Maher J."/>
            <person name="Tomlinson C."/>
            <person name="Dauphin-Kohlberg S."/>
            <person name="Kozlowicz-Reilly A."/>
            <person name="Shah N."/>
            <person name="Swearengen-Shahid S."/>
            <person name="Snider J."/>
            <person name="Strong J.T."/>
            <person name="Thompson J."/>
            <person name="Yoakum M."/>
            <person name="Leonard S."/>
            <person name="Pearman C."/>
            <person name="Trani L."/>
            <person name="Radionenko M."/>
            <person name="Waligorski J.E."/>
            <person name="Wang C."/>
            <person name="Rock S.M."/>
            <person name="Tin-Wollam A.-M."/>
            <person name="Maupin R."/>
            <person name="Latreille P."/>
            <person name="Wendl M.C."/>
            <person name="Yang S.-P."/>
            <person name="Pohl C."/>
            <person name="Wallis J.W."/>
            <person name="Spieth J."/>
            <person name="Bieri T.A."/>
            <person name="Berkowicz N."/>
            <person name="Nelson J.O."/>
            <person name="Osborne J."/>
            <person name="Ding L."/>
            <person name="Meyer R."/>
            <person name="Sabo A."/>
            <person name="Shotland Y."/>
            <person name="Sinha P."/>
            <person name="Wohldmann P.E."/>
            <person name="Cook L.L."/>
            <person name="Hickenbotham M.T."/>
            <person name="Eldred J."/>
            <person name="Williams D."/>
            <person name="Jones T.A."/>
            <person name="She X."/>
            <person name="Ciccarelli F.D."/>
            <person name="Izaurralde E."/>
            <person name="Taylor J."/>
            <person name="Schmutz J."/>
            <person name="Myers R.M."/>
            <person name="Cox D.R."/>
            <person name="Huang X."/>
            <person name="McPherson J.D."/>
            <person name="Mardis E.R."/>
            <person name="Clifton S.W."/>
            <person name="Warren W.C."/>
            <person name="Chinwalla A.T."/>
            <person name="Eddy S.R."/>
            <person name="Marra M.A."/>
            <person name="Ovcharenko I."/>
            <person name="Furey T.S."/>
            <person name="Miller W."/>
            <person name="Eichler E.E."/>
            <person name="Bork P."/>
            <person name="Suyama M."/>
            <person name="Torrents D."/>
            <person name="Waterston R.H."/>
            <person name="Wilson R.K."/>
        </authorList>
    </citation>
    <scope>NUCLEOTIDE SEQUENCE [LARGE SCALE GENOMIC DNA]</scope>
</reference>
<reference key="2">
    <citation type="journal article" date="1994" name="Gene">
        <title>Identification of homeobox genes expressed in human haemopoietic progenitor cells.</title>
        <authorList>
            <person name="Moretti P."/>
            <person name="Simmons P."/>
            <person name="Thomas P."/>
            <person name="Haylock D."/>
            <person name="Rathjen P."/>
            <person name="Vadas M."/>
            <person name="D'Andrea R."/>
        </authorList>
    </citation>
    <scope>NUCLEOTIDE SEQUENCE [MRNA] OF 304-342</scope>
    <scope>TISSUE SPECIFICITY</scope>
    <source>
        <tissue>Bone marrow</tissue>
    </source>
</reference>
<organism>
    <name type="scientific">Homo sapiens</name>
    <name type="common">Human</name>
    <dbReference type="NCBI Taxonomy" id="9606"/>
    <lineage>
        <taxon>Eukaryota</taxon>
        <taxon>Metazoa</taxon>
        <taxon>Chordata</taxon>
        <taxon>Craniata</taxon>
        <taxon>Vertebrata</taxon>
        <taxon>Euteleostomi</taxon>
        <taxon>Mammalia</taxon>
        <taxon>Eutheria</taxon>
        <taxon>Euarchontoglires</taxon>
        <taxon>Primates</taxon>
        <taxon>Haplorrhini</taxon>
        <taxon>Catarrhini</taxon>
        <taxon>Hominidae</taxon>
        <taxon>Homo</taxon>
    </lineage>
</organism>
<evidence type="ECO:0000250" key="1">
    <source>
        <dbReference type="UniProtKB" id="G3UXB3"/>
    </source>
</evidence>
<evidence type="ECO:0000255" key="2">
    <source>
        <dbReference type="PROSITE-ProRule" id="PRU00108"/>
    </source>
</evidence>
<evidence type="ECO:0000256" key="3">
    <source>
        <dbReference type="SAM" id="MobiDB-lite"/>
    </source>
</evidence>
<evidence type="ECO:0000269" key="4">
    <source>
    </source>
</evidence>
<evidence type="ECO:0000303" key="5">
    <source>
    </source>
</evidence>
<evidence type="ECO:0000305" key="6"/>
<evidence type="ECO:0000312" key="7">
    <source>
        <dbReference type="HGNC" id="HGNC:24975"/>
    </source>
</evidence>
<proteinExistence type="evidence at transcript level"/>
<dbReference type="EMBL" id="AC118281">
    <property type="status" value="NOT_ANNOTATED_CDS"/>
    <property type="molecule type" value="Genomic_DNA"/>
</dbReference>
<dbReference type="EMBL" id="X76978">
    <property type="protein sequence ID" value="CAA54282.1"/>
    <property type="molecule type" value="mRNA"/>
</dbReference>
<dbReference type="CCDS" id="CCDS93464.1"/>
<dbReference type="PIR" id="I38143">
    <property type="entry name" value="I38143"/>
</dbReference>
<dbReference type="RefSeq" id="NP_001277008.1">
    <property type="nucleotide sequence ID" value="NM_001290079.1"/>
</dbReference>
<dbReference type="SMR" id="Q15270"/>
<dbReference type="FunCoup" id="Q15270">
    <property type="interactions" value="462"/>
</dbReference>
<dbReference type="IntAct" id="Q15270">
    <property type="interactions" value="1"/>
</dbReference>
<dbReference type="STRING" id="9606.ENSP00000407978"/>
<dbReference type="PhosphoSitePlus" id="Q15270"/>
<dbReference type="BioMuta" id="NKX1-1"/>
<dbReference type="DMDM" id="189029591"/>
<dbReference type="MassIVE" id="Q15270"/>
<dbReference type="PaxDb" id="9606-ENSP00000407978"/>
<dbReference type="PeptideAtlas" id="Q15270"/>
<dbReference type="ProteomicsDB" id="60507"/>
<dbReference type="Antibodypedia" id="22251">
    <property type="antibodies" value="79 antibodies from 11 providers"/>
</dbReference>
<dbReference type="Ensembl" id="ENST00000422806.2">
    <property type="protein sequence ID" value="ENSP00000407978.2"/>
    <property type="gene ID" value="ENSG00000235608.2"/>
</dbReference>
<dbReference type="GeneID" id="54729"/>
<dbReference type="KEGG" id="hsa:54729"/>
<dbReference type="MANE-Select" id="ENST00000422806.2">
    <property type="protein sequence ID" value="ENSP00000407978.2"/>
    <property type="RefSeq nucleotide sequence ID" value="NM_001290079.1"/>
    <property type="RefSeq protein sequence ID" value="NP_001277008.1"/>
</dbReference>
<dbReference type="UCSC" id="uc062ulo.1">
    <property type="organism name" value="human"/>
</dbReference>
<dbReference type="AGR" id="HGNC:24975"/>
<dbReference type="CTD" id="54729"/>
<dbReference type="DisGeNET" id="54729"/>
<dbReference type="GeneCards" id="NKX1-1"/>
<dbReference type="HGNC" id="HGNC:24975">
    <property type="gene designation" value="NKX1-1"/>
</dbReference>
<dbReference type="HPA" id="ENSG00000235608">
    <property type="expression patterns" value="Not detected"/>
</dbReference>
<dbReference type="MIM" id="617869">
    <property type="type" value="gene"/>
</dbReference>
<dbReference type="neXtProt" id="NX_Q15270"/>
<dbReference type="PharmGKB" id="PA145148380"/>
<dbReference type="VEuPathDB" id="HostDB:ENSG00000235608"/>
<dbReference type="eggNOG" id="KOG0488">
    <property type="taxonomic scope" value="Eukaryota"/>
</dbReference>
<dbReference type="GeneTree" id="ENSGT00940000162861"/>
<dbReference type="HOGENOM" id="CLU_063378_1_0_1"/>
<dbReference type="InParanoid" id="Q15270"/>
<dbReference type="OMA" id="DPCKADE"/>
<dbReference type="OrthoDB" id="6159439at2759"/>
<dbReference type="PAN-GO" id="Q15270">
    <property type="GO annotations" value="5 GO annotations based on evolutionary models"/>
</dbReference>
<dbReference type="PhylomeDB" id="Q15270"/>
<dbReference type="TreeFam" id="TF316128"/>
<dbReference type="PathwayCommons" id="Q15270"/>
<dbReference type="SignaLink" id="Q15270"/>
<dbReference type="Pharos" id="Q15270">
    <property type="development level" value="Tdark"/>
</dbReference>
<dbReference type="PRO" id="PR:Q15270"/>
<dbReference type="Proteomes" id="UP000005640">
    <property type="component" value="Chromosome 4"/>
</dbReference>
<dbReference type="RNAct" id="Q15270">
    <property type="molecule type" value="protein"/>
</dbReference>
<dbReference type="Bgee" id="ENSG00000235608">
    <property type="expression patterns" value="Expressed in left testis and 2 other cell types or tissues"/>
</dbReference>
<dbReference type="GO" id="GO:0000785">
    <property type="term" value="C:chromatin"/>
    <property type="evidence" value="ECO:0000247"/>
    <property type="project" value="NTNU_SB"/>
</dbReference>
<dbReference type="GO" id="GO:0005634">
    <property type="term" value="C:nucleus"/>
    <property type="evidence" value="ECO:0000318"/>
    <property type="project" value="GO_Central"/>
</dbReference>
<dbReference type="GO" id="GO:0000981">
    <property type="term" value="F:DNA-binding transcription factor activity, RNA polymerase II-specific"/>
    <property type="evidence" value="ECO:0000247"/>
    <property type="project" value="NTNU_SB"/>
</dbReference>
<dbReference type="GO" id="GO:0000978">
    <property type="term" value="F:RNA polymerase II cis-regulatory region sequence-specific DNA binding"/>
    <property type="evidence" value="ECO:0000318"/>
    <property type="project" value="GO_Central"/>
</dbReference>
<dbReference type="GO" id="GO:0030154">
    <property type="term" value="P:cell differentiation"/>
    <property type="evidence" value="ECO:0000318"/>
    <property type="project" value="GO_Central"/>
</dbReference>
<dbReference type="GO" id="GO:0006357">
    <property type="term" value="P:regulation of transcription by RNA polymerase II"/>
    <property type="evidence" value="ECO:0000318"/>
    <property type="project" value="GO_Central"/>
</dbReference>
<dbReference type="CDD" id="cd00086">
    <property type="entry name" value="homeodomain"/>
    <property type="match status" value="1"/>
</dbReference>
<dbReference type="FunFam" id="1.10.10.60:FF:000294">
    <property type="entry name" value="NK1 transcription factor-related protein 1"/>
    <property type="match status" value="1"/>
</dbReference>
<dbReference type="Gene3D" id="1.10.10.60">
    <property type="entry name" value="Homeodomain-like"/>
    <property type="match status" value="1"/>
</dbReference>
<dbReference type="InterPro" id="IPR001356">
    <property type="entry name" value="HD"/>
</dbReference>
<dbReference type="InterPro" id="IPR020479">
    <property type="entry name" value="HD_metazoa"/>
</dbReference>
<dbReference type="InterPro" id="IPR017970">
    <property type="entry name" value="Homeobox_CS"/>
</dbReference>
<dbReference type="InterPro" id="IPR050394">
    <property type="entry name" value="Homeobox_NK-like"/>
</dbReference>
<dbReference type="InterPro" id="IPR009057">
    <property type="entry name" value="Homeodomain-like_sf"/>
</dbReference>
<dbReference type="PANTHER" id="PTHR24340">
    <property type="entry name" value="HOMEOBOX PROTEIN NKX"/>
    <property type="match status" value="1"/>
</dbReference>
<dbReference type="PANTHER" id="PTHR24340:SF26">
    <property type="entry name" value="NK1 TRANSCRIPTION FACTOR-RELATED PROTEIN 1"/>
    <property type="match status" value="1"/>
</dbReference>
<dbReference type="Pfam" id="PF00046">
    <property type="entry name" value="Homeodomain"/>
    <property type="match status" value="1"/>
</dbReference>
<dbReference type="PRINTS" id="PR00024">
    <property type="entry name" value="HOMEOBOX"/>
</dbReference>
<dbReference type="SMART" id="SM00389">
    <property type="entry name" value="HOX"/>
    <property type="match status" value="1"/>
</dbReference>
<dbReference type="SUPFAM" id="SSF46689">
    <property type="entry name" value="Homeodomain-like"/>
    <property type="match status" value="1"/>
</dbReference>
<dbReference type="PROSITE" id="PS00027">
    <property type="entry name" value="HOMEOBOX_1"/>
    <property type="match status" value="1"/>
</dbReference>
<dbReference type="PROSITE" id="PS50071">
    <property type="entry name" value="HOMEOBOX_2"/>
    <property type="match status" value="1"/>
</dbReference>